<accession>C0STK8</accession>
<reference key="1">
    <citation type="journal article" date="2009" name="Toxicon">
        <title>Identification and characterization of phospholipase A2 inhibitors from the serum of the Japanese rat snake, Elaphe climacophora.</title>
        <authorList>
            <person name="Shirai R."/>
            <person name="Toriba M."/>
            <person name="Hayashi K."/>
            <person name="Ikeda K."/>
            <person name="Inoue S."/>
        </authorList>
    </citation>
    <scope>NUCLEOTIDE SEQUENCE [MRNA]</scope>
    <scope>PROTEIN SEQUENCE OF 20-31</scope>
    <scope>SUBUNIT</scope>
    <source>
        <tissue>Liver</tissue>
        <tissue>Serum</tissue>
    </source>
</reference>
<name>PLIGA_ELACL</name>
<keyword id="KW-0903">Direct protein sequencing</keyword>
<keyword id="KW-1015">Disulfide bond</keyword>
<keyword id="KW-0593">Phospholipase A2 inhibitor</keyword>
<keyword id="KW-0964">Secreted</keyword>
<keyword id="KW-0732">Signal</keyword>
<protein>
    <recommendedName>
        <fullName evidence="3">Phospholipase A2 inhibitor gamma subunit A</fullName>
    </recommendedName>
    <alternativeName>
        <fullName>PLI-gamma A</fullName>
    </alternativeName>
    <alternativeName>
        <fullName evidence="3">gamma-PLI A</fullName>
    </alternativeName>
</protein>
<dbReference type="EMBL" id="AB462512">
    <property type="protein sequence ID" value="BAH47550.1"/>
    <property type="molecule type" value="mRNA"/>
</dbReference>
<dbReference type="SMR" id="C0STK8"/>
<dbReference type="GO" id="GO:0005576">
    <property type="term" value="C:extracellular region"/>
    <property type="evidence" value="ECO:0007669"/>
    <property type="project" value="UniProtKB-SubCell"/>
</dbReference>
<dbReference type="GO" id="GO:0019834">
    <property type="term" value="F:phospholipase A2 inhibitor activity"/>
    <property type="evidence" value="ECO:0007669"/>
    <property type="project" value="UniProtKB-KW"/>
</dbReference>
<dbReference type="CDD" id="cd23629">
    <property type="entry name" value="TFP_LU_ECD_PLIGA"/>
    <property type="match status" value="1"/>
</dbReference>
<dbReference type="InterPro" id="IPR050918">
    <property type="entry name" value="CNF-like_PLA2_Inhibitor"/>
</dbReference>
<dbReference type="InterPro" id="IPR016054">
    <property type="entry name" value="LY6_UPA_recep-like"/>
</dbReference>
<dbReference type="InterPro" id="IPR016338">
    <property type="entry name" value="PLipase_A2-inh_b-type"/>
</dbReference>
<dbReference type="InterPro" id="IPR004126">
    <property type="entry name" value="PLipase_A2_inh_N"/>
</dbReference>
<dbReference type="InterPro" id="IPR045860">
    <property type="entry name" value="Snake_toxin-like_sf"/>
</dbReference>
<dbReference type="PANTHER" id="PTHR20914">
    <property type="entry name" value="LY6/PLAUR DOMAIN-CONTAINING PROTEIN 8"/>
    <property type="match status" value="1"/>
</dbReference>
<dbReference type="PANTHER" id="PTHR20914:SF30">
    <property type="entry name" value="LY6_PLAUR DOMAIN CONTAINING 9"/>
    <property type="match status" value="1"/>
</dbReference>
<dbReference type="Pfam" id="PF02988">
    <property type="entry name" value="PLA2_inh"/>
    <property type="match status" value="1"/>
</dbReference>
<dbReference type="Pfam" id="PF00021">
    <property type="entry name" value="UPAR_LY6"/>
    <property type="match status" value="1"/>
</dbReference>
<dbReference type="PIRSF" id="PIRSF002023">
    <property type="entry name" value="PLA2_inhib_alpha/gamma"/>
    <property type="match status" value="1"/>
</dbReference>
<dbReference type="SMART" id="SM00134">
    <property type="entry name" value="LU"/>
    <property type="match status" value="1"/>
</dbReference>
<dbReference type="SUPFAM" id="SSF57302">
    <property type="entry name" value="Snake toxin-like"/>
    <property type="match status" value="2"/>
</dbReference>
<evidence type="ECO:0000250" key="1">
    <source>
        <dbReference type="UniProtKB" id="Q7LZI1"/>
    </source>
</evidence>
<evidence type="ECO:0000269" key="2">
    <source>
    </source>
</evidence>
<evidence type="ECO:0000303" key="3">
    <source>
    </source>
</evidence>
<evidence type="ECO:0000305" key="4"/>
<evidence type="ECO:0000305" key="5">
    <source>
    </source>
</evidence>
<proteinExistence type="evidence at protein level"/>
<organism>
    <name type="scientific">Elaphe climacophora</name>
    <name type="common">Japanese rat snake</name>
    <name type="synonym">Coluber climacophorus</name>
    <dbReference type="NCBI Taxonomy" id="31143"/>
    <lineage>
        <taxon>Eukaryota</taxon>
        <taxon>Metazoa</taxon>
        <taxon>Chordata</taxon>
        <taxon>Craniata</taxon>
        <taxon>Vertebrata</taxon>
        <taxon>Euteleostomi</taxon>
        <taxon>Lepidosauria</taxon>
        <taxon>Squamata</taxon>
        <taxon>Bifurcata</taxon>
        <taxon>Unidentata</taxon>
        <taxon>Episquamata</taxon>
        <taxon>Toxicofera</taxon>
        <taxon>Serpentes</taxon>
        <taxon>Colubroidea</taxon>
        <taxon>Colubridae</taxon>
        <taxon>Colubrinae</taxon>
        <taxon>Elaphe</taxon>
    </lineage>
</organism>
<sequence>MKSLQIICLLFIFVARGSCRSCEICHNVGNDCGYDYVEECHSPEDQCGKVFLEISSAPLSIRSIHRNCFSSSLCKLEHFDVNTGQETYLRGRIHCCDEEKCEGRPFPGLPLSHPNGYVCPGVLGLFSEDSSESEAACKGDETKCINIVGYRKERFPGDIAYNIKGCVSSCPELRLSNRTHEERRNDLIKVECRDAVKITPSE</sequence>
<comment type="function">
    <text evidence="2">Inhibits the enzymatic activity of the phospholipase A2 (PLA2).</text>
</comment>
<comment type="subunit">
    <text evidence="5">Heteromer composed of subunit A and subunit B.</text>
</comment>
<comment type="subcellular location">
    <subcellularLocation>
        <location evidence="2">Secreted</location>
    </subcellularLocation>
    <text evidence="2">Secreted in blood plasma.</text>
</comment>
<comment type="tissue specificity">
    <text evidence="5">Expressed by the liver.</text>
</comment>
<comment type="miscellaneous">
    <text evidence="2">Concentration of this protein in the serum is 8-fold lower than in the E.quadrivirgata (another non-venomous snake) serum. This difference may reflect the difference in the food habits of these snakes. E.quadrivirgata preys upon snakes including the venomous snakes, whereas E.climacophora only preys upon small mammals and birds.</text>
</comment>
<comment type="similarity">
    <text evidence="4">Belongs to the CNF-like-inhibitor family.</text>
</comment>
<feature type="signal peptide" evidence="2">
    <location>
        <begin position="1"/>
        <end position="19"/>
    </location>
</feature>
<feature type="chain" id="PRO_5002902078" description="Phospholipase A2 inhibitor gamma subunit A">
    <location>
        <begin position="20"/>
        <end position="202"/>
    </location>
</feature>
<feature type="disulfide bond" evidence="1">
    <location>
        <begin position="22"/>
        <end position="47"/>
    </location>
</feature>
<feature type="disulfide bond" evidence="1">
    <location>
        <begin position="25"/>
        <end position="32"/>
    </location>
</feature>
<feature type="disulfide bond" evidence="1">
    <location>
        <begin position="40"/>
        <end position="68"/>
    </location>
</feature>
<feature type="disulfide bond" evidence="1">
    <location>
        <begin position="74"/>
        <end position="95"/>
    </location>
</feature>
<feature type="disulfide bond" evidence="1">
    <location>
        <begin position="96"/>
        <end position="101"/>
    </location>
</feature>
<feature type="disulfide bond" evidence="1">
    <location>
        <begin position="119"/>
        <end position="144"/>
    </location>
</feature>
<feature type="disulfide bond" evidence="1">
    <location>
        <begin position="137"/>
        <end position="166"/>
    </location>
</feature>
<feature type="disulfide bond" evidence="1">
    <location>
        <begin position="170"/>
        <end position="192"/>
    </location>
</feature>